<protein>
    <recommendedName>
        <fullName evidence="3">Oxidoreductase AN1597</fullName>
        <ecNumber evidence="5">1.-.-.-</ecNumber>
    </recommendedName>
    <alternativeName>
        <fullName evidence="3">Pimaradiene biosynthesis cluster protein AN1597</fullName>
    </alternativeName>
</protein>
<name>PBCF_EMENI</name>
<feature type="chain" id="PRO_0000450844" description="Oxidoreductase AN1597">
    <location>
        <begin position="1"/>
        <end position="295"/>
    </location>
</feature>
<proteinExistence type="evidence at transcript level"/>
<reference key="1">
    <citation type="journal article" date="2005" name="Nature">
        <title>Sequencing of Aspergillus nidulans and comparative analysis with A. fumigatus and A. oryzae.</title>
        <authorList>
            <person name="Galagan J.E."/>
            <person name="Calvo S.E."/>
            <person name="Cuomo C."/>
            <person name="Ma L.-J."/>
            <person name="Wortman J.R."/>
            <person name="Batzoglou S."/>
            <person name="Lee S.-I."/>
            <person name="Bastuerkmen M."/>
            <person name="Spevak C.C."/>
            <person name="Clutterbuck J."/>
            <person name="Kapitonov V."/>
            <person name="Jurka J."/>
            <person name="Scazzocchio C."/>
            <person name="Farman M.L."/>
            <person name="Butler J."/>
            <person name="Purcell S."/>
            <person name="Harris S."/>
            <person name="Braus G.H."/>
            <person name="Draht O."/>
            <person name="Busch S."/>
            <person name="D'Enfert C."/>
            <person name="Bouchier C."/>
            <person name="Goldman G.H."/>
            <person name="Bell-Pedersen D."/>
            <person name="Griffiths-Jones S."/>
            <person name="Doonan J.H."/>
            <person name="Yu J."/>
            <person name="Vienken K."/>
            <person name="Pain A."/>
            <person name="Freitag M."/>
            <person name="Selker E.U."/>
            <person name="Archer D.B."/>
            <person name="Penalva M.A."/>
            <person name="Oakley B.R."/>
            <person name="Momany M."/>
            <person name="Tanaka T."/>
            <person name="Kumagai T."/>
            <person name="Asai K."/>
            <person name="Machida M."/>
            <person name="Nierman W.C."/>
            <person name="Denning D.W."/>
            <person name="Caddick M.X."/>
            <person name="Hynes M."/>
            <person name="Paoletti M."/>
            <person name="Fischer R."/>
            <person name="Miller B.L."/>
            <person name="Dyer P.S."/>
            <person name="Sachs M.S."/>
            <person name="Osmani S.A."/>
            <person name="Birren B.W."/>
        </authorList>
    </citation>
    <scope>NUCLEOTIDE SEQUENCE [LARGE SCALE GENOMIC DNA]</scope>
    <source>
        <strain>FGSC A4 / ATCC 38163 / CBS 112.46 / NRRL 194 / M139</strain>
    </source>
</reference>
<reference key="2">
    <citation type="journal article" date="2009" name="Fungal Genet. Biol.">
        <title>The 2008 update of the Aspergillus nidulans genome annotation: a community effort.</title>
        <authorList>
            <person name="Wortman J.R."/>
            <person name="Gilsenan J.M."/>
            <person name="Joardar V."/>
            <person name="Deegan J."/>
            <person name="Clutterbuck J."/>
            <person name="Andersen M.R."/>
            <person name="Archer D."/>
            <person name="Bencina M."/>
            <person name="Braus G."/>
            <person name="Coutinho P."/>
            <person name="von Dohren H."/>
            <person name="Doonan J."/>
            <person name="Driessen A.J."/>
            <person name="Durek P."/>
            <person name="Espeso E."/>
            <person name="Fekete E."/>
            <person name="Flipphi M."/>
            <person name="Estrada C.G."/>
            <person name="Geysens S."/>
            <person name="Goldman G."/>
            <person name="de Groot P.W."/>
            <person name="Hansen K."/>
            <person name="Harris S.D."/>
            <person name="Heinekamp T."/>
            <person name="Helmstaedt K."/>
            <person name="Henrissat B."/>
            <person name="Hofmann G."/>
            <person name="Homan T."/>
            <person name="Horio T."/>
            <person name="Horiuchi H."/>
            <person name="James S."/>
            <person name="Jones M."/>
            <person name="Karaffa L."/>
            <person name="Karanyi Z."/>
            <person name="Kato M."/>
            <person name="Keller N."/>
            <person name="Kelly D.E."/>
            <person name="Kiel J.A."/>
            <person name="Kim J.M."/>
            <person name="van der Klei I.J."/>
            <person name="Klis F.M."/>
            <person name="Kovalchuk A."/>
            <person name="Krasevec N."/>
            <person name="Kubicek C.P."/>
            <person name="Liu B."/>
            <person name="Maccabe A."/>
            <person name="Meyer V."/>
            <person name="Mirabito P."/>
            <person name="Miskei M."/>
            <person name="Mos M."/>
            <person name="Mullins J."/>
            <person name="Nelson D.R."/>
            <person name="Nielsen J."/>
            <person name="Oakley B.R."/>
            <person name="Osmani S.A."/>
            <person name="Pakula T."/>
            <person name="Paszewski A."/>
            <person name="Paulsen I."/>
            <person name="Pilsyk S."/>
            <person name="Pocsi I."/>
            <person name="Punt P.J."/>
            <person name="Ram A.F."/>
            <person name="Ren Q."/>
            <person name="Robellet X."/>
            <person name="Robson G."/>
            <person name="Seiboth B."/>
            <person name="van Solingen P."/>
            <person name="Specht T."/>
            <person name="Sun J."/>
            <person name="Taheri-Talesh N."/>
            <person name="Takeshita N."/>
            <person name="Ussery D."/>
            <person name="vanKuyk P.A."/>
            <person name="Visser H."/>
            <person name="van de Vondervoort P.J."/>
            <person name="de Vries R.P."/>
            <person name="Walton J."/>
            <person name="Xiang X."/>
            <person name="Xiong Y."/>
            <person name="Zeng A.P."/>
            <person name="Brandt B.W."/>
            <person name="Cornell M.J."/>
            <person name="van den Hondel C.A."/>
            <person name="Visser J."/>
            <person name="Oliver S.G."/>
            <person name="Turner G."/>
        </authorList>
    </citation>
    <scope>GENOME REANNOTATION</scope>
    <source>
        <strain>FGSC A4 / ATCC 38163 / CBS 112.46 / NRRL 194 / M139</strain>
    </source>
</reference>
<reference key="3">
    <citation type="journal article" date="2012" name="PLoS ONE">
        <title>Identification and characterization of a novel diterpene gene cluster in Aspergillus nidulans.</title>
        <authorList>
            <person name="Bromann K."/>
            <person name="Toivari M."/>
            <person name="Viljanen K."/>
            <person name="Vuoristo A."/>
            <person name="Ruohonen L."/>
            <person name="Nakari-Setaelae T."/>
        </authorList>
    </citation>
    <scope>FUNCTION</scope>
    <scope>INDUCTION</scope>
    <scope>PATHWAY</scope>
</reference>
<reference key="4">
    <citation type="journal article" date="2016" name="Appl. Microbiol. Biotechnol.">
        <title>Engineering Aspergillus nidulans for heterologous ent-kaurene and gamma-terpinene production.</title>
        <authorList>
            <person name="Bromann K."/>
            <person name="Toivari M."/>
            <person name="Viljanen K."/>
            <person name="Ruohonen L."/>
            <person name="Nakari-Setaelae T."/>
        </authorList>
    </citation>
    <scope>FUNCTION</scope>
</reference>
<comment type="function">
    <text evidence="1 2 5">Oxidoreductase; part of the gene cluster that mediates the biosynthesis of the diterpene ent-pimara-8(14),15-diene (PD) (PubMed:22506079, PubMed:27098256). Within the cluster, the HMG-CoA reductase AN1593 functions in the mevalonate pathway, which produces isoprenoid precursors (PubMed:22506079, PubMed:27098256). The geranylgeranyl pyrophosphate (GGPP) synthase AN1592 is needed in the formation of GGPP, the precursor for diterpenes (PubMed:22506079, PubMed:27098256). Lastly, the pimaradiene synthase pbcA performs the 2 cyclization steps that convert GGPP to ent-pimara-8(14),15-diene (PubMed:22506079, PubMed:27098256). The putative roles of the remaining cluster enzymes in ent-pimara-8(14),15-diene biosynthesis is unclear (Probable). The cytochrome P450 monooxygenase AN1598, the glutathione S-transferase AN1595, the oxidoreductases AN1596 and AN1597 probably function as decorative enzymes (Probable). It is possible that in biological conditions the compound is oxidized to ent-pimara-8(14),15-dien-19-oic acid, which is a bioactive diterpene compound predominant in many plant extracts (Probable).</text>
</comment>
<comment type="pathway">
    <text evidence="5">Secondary metabolite biosynthesis; terpenoid biosynthesis.</text>
</comment>
<comment type="induction">
    <text evidence="1">Expression is positively regulated by the cluster-specific transcription factor pbcR.</text>
</comment>
<comment type="similarity">
    <text evidence="4">Belongs to the asaB hydroxylase/desaturase family.</text>
</comment>
<gene>
    <name type="ORF">AN1597</name>
    <name type="ORF">ANIA_01597</name>
</gene>
<sequence length="295" mass="33101">MVDATSPPGVNAVVNYYVPNSDGSPPATNDMAVMLGQKDMISHKMRIRDLRPYKEEYSLDRNGFQYATIHSTLTDATDETQIKEVYYREIEKLVQDITGAKRVLAFHHAVRTRTGNEFGEQIKDRYQGVEGPAYRVHIDQTPQGALSIVQFMFPDLADDVRNGSFQVINVWRPLTRVQRDPLMVADAAEMPPEDLLLISRKYYNGLHSSNFVIKYDGRMAAGEGPTDGLSGDGKHSWWYIGDQEPTEALVFSSSGFRNGKAIIGTAHDLYSAEPMINAYERKNASSLYGHDESQI</sequence>
<evidence type="ECO:0000269" key="1">
    <source>
    </source>
</evidence>
<evidence type="ECO:0000269" key="2">
    <source>
    </source>
</evidence>
<evidence type="ECO:0000303" key="3">
    <source>
    </source>
</evidence>
<evidence type="ECO:0000305" key="4"/>
<evidence type="ECO:0000305" key="5">
    <source>
    </source>
</evidence>
<dbReference type="EC" id="1.-.-.-" evidence="5"/>
<dbReference type="EMBL" id="AACD01000025">
    <property type="protein sequence ID" value="EAA64304.1"/>
    <property type="molecule type" value="Genomic_DNA"/>
</dbReference>
<dbReference type="EMBL" id="BN001307">
    <property type="protein sequence ID" value="CBF85186.1"/>
    <property type="molecule type" value="Genomic_DNA"/>
</dbReference>
<dbReference type="RefSeq" id="XP_659201.1">
    <property type="nucleotide sequence ID" value="XM_654109.1"/>
</dbReference>
<dbReference type="SMR" id="A0A1U8QJR1"/>
<dbReference type="EnsemblFungi" id="CBF85186">
    <property type="protein sequence ID" value="CBF85186"/>
    <property type="gene ID" value="ANIA_01597"/>
</dbReference>
<dbReference type="GeneID" id="2875703"/>
<dbReference type="KEGG" id="ani:ANIA_01597"/>
<dbReference type="eggNOG" id="ENOG502RYCS">
    <property type="taxonomic scope" value="Eukaryota"/>
</dbReference>
<dbReference type="HOGENOM" id="CLU_042688_2_0_1"/>
<dbReference type="InParanoid" id="A0A1U8QJR1"/>
<dbReference type="OMA" id="NYVMSHG"/>
<dbReference type="OrthoDB" id="412788at2759"/>
<dbReference type="UniPathway" id="UPA00213"/>
<dbReference type="Proteomes" id="UP000000560">
    <property type="component" value="Chromosome VII"/>
</dbReference>
<dbReference type="GO" id="GO:0016491">
    <property type="term" value="F:oxidoreductase activity"/>
    <property type="evidence" value="ECO:0007669"/>
    <property type="project" value="UniProtKB-KW"/>
</dbReference>
<dbReference type="GO" id="GO:0016114">
    <property type="term" value="P:terpenoid biosynthetic process"/>
    <property type="evidence" value="ECO:0007669"/>
    <property type="project" value="UniProtKB-UniPathway"/>
</dbReference>
<dbReference type="InterPro" id="IPR044053">
    <property type="entry name" value="AsaB-like"/>
</dbReference>
<dbReference type="NCBIfam" id="NF041278">
    <property type="entry name" value="CmcJ_NvfI_EfuI"/>
    <property type="match status" value="1"/>
</dbReference>
<dbReference type="PANTHER" id="PTHR34598">
    <property type="entry name" value="BLL6449 PROTEIN"/>
    <property type="match status" value="1"/>
</dbReference>
<dbReference type="PANTHER" id="PTHR34598:SF3">
    <property type="entry name" value="OXIDOREDUCTASE AN1597"/>
    <property type="match status" value="1"/>
</dbReference>
<organism>
    <name type="scientific">Emericella nidulans (strain FGSC A4 / ATCC 38163 / CBS 112.46 / NRRL 194 / M139)</name>
    <name type="common">Aspergillus nidulans</name>
    <dbReference type="NCBI Taxonomy" id="227321"/>
    <lineage>
        <taxon>Eukaryota</taxon>
        <taxon>Fungi</taxon>
        <taxon>Dikarya</taxon>
        <taxon>Ascomycota</taxon>
        <taxon>Pezizomycotina</taxon>
        <taxon>Eurotiomycetes</taxon>
        <taxon>Eurotiomycetidae</taxon>
        <taxon>Eurotiales</taxon>
        <taxon>Aspergillaceae</taxon>
        <taxon>Aspergillus</taxon>
        <taxon>Aspergillus subgen. Nidulantes</taxon>
    </lineage>
</organism>
<keyword id="KW-0560">Oxidoreductase</keyword>
<keyword id="KW-1185">Reference proteome</keyword>
<accession>A0A1U8QJR1</accession>
<accession>C8VN90</accession>
<accession>Q5BCY3</accession>